<comment type="function">
    <text evidence="1 4">May have a role in transport via clathrin-coated vesicles from the trans-Golgi network to endosomes. Stimulates clathrin assembly (By similarity). Binds to membranes enriched in phosphatidylinositol 3-phosphate (PtdIns(3)P). Plays an important role in protein trafficking.</text>
</comment>
<comment type="subunit">
    <text evidence="4">Interacts with clathrin, VTI12, DELTA-ADR and ALPHA-ADR.</text>
</comment>
<comment type="subcellular location">
    <subcellularLocation>
        <location evidence="4">Golgi apparatus</location>
    </subcellularLocation>
    <subcellularLocation>
        <location evidence="4">Cytoplasmic vesicle</location>
        <location evidence="4">Clathrin-coated vesicle</location>
    </subcellularLocation>
    <text>Also localizes to a novel cellular compartment, the 'delta compartment', characterized by colocalization of EPSIN2 and DELTA-ADR.</text>
</comment>
<comment type="alternative products">
    <event type="alternative splicing"/>
    <isoform>
        <id>Q67YI9-1</id>
        <name>1</name>
        <sequence type="displayed"/>
    </isoform>
    <isoform>
        <id>Q67YI9-2</id>
        <name>2</name>
        <sequence type="described" ref="VSP_039700 VSP_039701"/>
    </isoform>
</comment>
<comment type="domain">
    <text>The ENTH domain is required for PtdIns(3)P affinity and EPSIN2 subcellular location.</text>
</comment>
<comment type="similarity">
    <text evidence="6">Belongs to the epsin family.</text>
</comment>
<comment type="sequence caution" evidence="6">
    <conflict type="erroneous gene model prediction">
        <sequence resource="EMBL-CDS" id="AAC64305"/>
    </conflict>
</comment>
<comment type="sequence caution" evidence="6">
    <conflict type="erroneous gene model prediction">
        <sequence resource="EMBL-CDS" id="AAC64306"/>
    </conflict>
</comment>
<sequence>MKKVFGQTVRDLKREVNKKVLKVPGVEQKVLDATSNEPWGPHGSLLADLAQASRNYHEYQLIMVVIWKRLSDTGKNWRHVYKALTVLEYMVGHGSERVIDEIRERAYQISTLSDFQYIDSGGRDQGSNVRKKSQSLVALVNDKERIAEVRQKAAANRDKYRSSAPGGMYKPSGGYGDKYDYGSRDEERSSYGREREYGYRDDDRNSRDGDRHSRDSEDRYGRDGNRDDDYRGRSRSVDNYGSRGRSSEREREDDGHSSSRGSGARADDNSQDGRGGLQRKFSEQNIGAPPSYEEAVSDSRSPVYSERDGGETPQVTAPGAASPPPPQVAAPEAASPPTGTNTANTTATFVNESPSQKVETFDEFDPRSAFSAGPPAYASTDGVTAPPTVTSMSAPTTSNSVEMDLLGSLADVFSSNALAIVPADSIYVETNGQANAGPAPSFSTSQPSTQSFDDPFGDSPFKAFTSTDTDSTPQQNFGASFQPPPPAFTSEVSHPDTAHNFGFGDSFSAVANPDPASQNVQPPSNSPGFPQEQFATSQSGIDILAGILPPSGPPVQSGPSIPTSQFPPSGNNMYEGFHSQPPVSTAPNLPGQTPFGQAVQPYNMVPHSQNMTGAMPFNSGGFMHQPGSQTPYSTPSGPAGQFMAHQGHGMPPSHGPQRTQSGPVTLQGNNNVMGDMFSQATPNSLTSSSSHPDLTPLTGAIEIVPPPQKKFEPKSSVWADTLSRGLVNFNISGSKTNPLADIGVDFEAINRREKRLEKQTNTPATSTINMGKAMGSGTGLGRSGATAMRPPPNPMTGSGMPMGGGMGVGSYGGMNQNQPMGMGMGAGMNQNQPMGMGMGPGMNMNMNMGGYGQGYPMQPQNPGMVPSPNMPGNNYNPMMGQGGYNPQQSYGGGYR</sequence>
<name>EPN2_ARATH</name>
<organism>
    <name type="scientific">Arabidopsis thaliana</name>
    <name type="common">Mouse-ear cress</name>
    <dbReference type="NCBI Taxonomy" id="3702"/>
    <lineage>
        <taxon>Eukaryota</taxon>
        <taxon>Viridiplantae</taxon>
        <taxon>Streptophyta</taxon>
        <taxon>Embryophyta</taxon>
        <taxon>Tracheophyta</taxon>
        <taxon>Spermatophyta</taxon>
        <taxon>Magnoliopsida</taxon>
        <taxon>eudicotyledons</taxon>
        <taxon>Gunneridae</taxon>
        <taxon>Pentapetalae</taxon>
        <taxon>rosids</taxon>
        <taxon>malvids</taxon>
        <taxon>Brassicales</taxon>
        <taxon>Brassicaceae</taxon>
        <taxon>Camelineae</taxon>
        <taxon>Arabidopsis</taxon>
    </lineage>
</organism>
<proteinExistence type="evidence at protein level"/>
<feature type="chain" id="PRO_0000397862" description="Clathrin interactor EPSIN 2">
    <location>
        <begin position="1"/>
        <end position="895"/>
    </location>
</feature>
<feature type="domain" description="ENTH" evidence="2">
    <location>
        <begin position="18"/>
        <end position="150"/>
    </location>
</feature>
<feature type="region of interest" description="Disordered" evidence="3">
    <location>
        <begin position="150"/>
        <end position="396"/>
    </location>
</feature>
<feature type="region of interest" description="Disordered" evidence="3">
    <location>
        <begin position="436"/>
        <end position="533"/>
    </location>
</feature>
<feature type="region of interest" description="Disordered" evidence="3">
    <location>
        <begin position="758"/>
        <end position="784"/>
    </location>
</feature>
<feature type="short sequence motif" description="Clathrin binding">
    <location>
        <begin position="409"/>
        <end position="413"/>
    </location>
</feature>
<feature type="short sequence motif" description="ALPHA-ADR binding">
    <location>
        <begin position="454"/>
        <end position="456"/>
    </location>
</feature>
<feature type="compositionally biased region" description="Basic and acidic residues" evidence="3">
    <location>
        <begin position="150"/>
        <end position="161"/>
    </location>
</feature>
<feature type="compositionally biased region" description="Basic and acidic residues" evidence="3">
    <location>
        <begin position="177"/>
        <end position="236"/>
    </location>
</feature>
<feature type="compositionally biased region" description="Basic and acidic residues" evidence="3">
    <location>
        <begin position="245"/>
        <end position="257"/>
    </location>
</feature>
<feature type="compositionally biased region" description="Low complexity" evidence="3">
    <location>
        <begin position="329"/>
        <end position="348"/>
    </location>
</feature>
<feature type="compositionally biased region" description="Polar residues" evidence="3">
    <location>
        <begin position="349"/>
        <end position="358"/>
    </location>
</feature>
<feature type="compositionally biased region" description="Polar residues" evidence="3">
    <location>
        <begin position="387"/>
        <end position="396"/>
    </location>
</feature>
<feature type="compositionally biased region" description="Low complexity" evidence="3">
    <location>
        <begin position="440"/>
        <end position="454"/>
    </location>
</feature>
<feature type="compositionally biased region" description="Polar residues" evidence="3">
    <location>
        <begin position="464"/>
        <end position="479"/>
    </location>
</feature>
<feature type="compositionally biased region" description="Polar residues" evidence="3">
    <location>
        <begin position="515"/>
        <end position="533"/>
    </location>
</feature>
<feature type="compositionally biased region" description="Polar residues" evidence="3">
    <location>
        <begin position="759"/>
        <end position="769"/>
    </location>
</feature>
<feature type="modified residue" description="Phosphoserine" evidence="8">
    <location>
        <position position="270"/>
    </location>
</feature>
<feature type="modified residue" description="Phosphoserine" evidence="7 8">
    <location>
        <position position="282"/>
    </location>
</feature>
<feature type="splice variant" id="VSP_039700" description="In isoform 2." evidence="5">
    <original>HQ</original>
    <variation>LA</variation>
    <location>
        <begin position="645"/>
        <end position="646"/>
    </location>
</feature>
<feature type="splice variant" id="VSP_039701" description="In isoform 2." evidence="5">
    <location>
        <begin position="647"/>
        <end position="895"/>
    </location>
</feature>
<feature type="mutagenesis site" description="Impaired clathrin binding." evidence="4">
    <original>LADVF</original>
    <variation>AAAAA</variation>
    <location>
        <begin position="409"/>
        <end position="413"/>
    </location>
</feature>
<feature type="mutagenesis site" description="Impaired ALPHA-ADR binding." evidence="4">
    <original>DPF</original>
    <variation>AAA</variation>
    <location>
        <begin position="454"/>
        <end position="456"/>
    </location>
</feature>
<feature type="sequence conflict" description="In Ref. 3; AAK91471/AAN72258." evidence="6" ref="3">
    <original>R</original>
    <variation>H</variation>
    <location>
        <position position="211"/>
    </location>
</feature>
<feature type="sequence conflict" description="In Ref. 4; BAD94036/BAF01674." evidence="6" ref="4">
    <original>S</original>
    <variation>N</variation>
    <location>
        <position position="291"/>
    </location>
</feature>
<feature type="sequence conflict" description="In Ref. 3; AAK91471/AAN72258." evidence="6" ref="3">
    <original>G</original>
    <variation>D</variation>
    <location>
        <position position="854"/>
    </location>
</feature>
<keyword id="KW-0025">Alternative splicing</keyword>
<keyword id="KW-0968">Cytoplasmic vesicle</keyword>
<keyword id="KW-0333">Golgi apparatus</keyword>
<keyword id="KW-0597">Phosphoprotein</keyword>
<keyword id="KW-0653">Protein transport</keyword>
<keyword id="KW-1185">Reference proteome</keyword>
<keyword id="KW-0813">Transport</keyword>
<dbReference type="EMBL" id="AC004450">
    <property type="protein sequence ID" value="AAC64305.1"/>
    <property type="status" value="ALT_SEQ"/>
    <property type="molecule type" value="Genomic_DNA"/>
</dbReference>
<dbReference type="EMBL" id="AC004450">
    <property type="protein sequence ID" value="AAC64306.1"/>
    <property type="status" value="ALT_SEQ"/>
    <property type="molecule type" value="Genomic_DNA"/>
</dbReference>
<dbReference type="EMBL" id="CP002685">
    <property type="protein sequence ID" value="AEC10216.1"/>
    <property type="molecule type" value="Genomic_DNA"/>
</dbReference>
<dbReference type="EMBL" id="CP002685">
    <property type="protein sequence ID" value="AEC10217.1"/>
    <property type="molecule type" value="Genomic_DNA"/>
</dbReference>
<dbReference type="EMBL" id="CP002685">
    <property type="protein sequence ID" value="AEC10218.1"/>
    <property type="molecule type" value="Genomic_DNA"/>
</dbReference>
<dbReference type="EMBL" id="CP002685">
    <property type="protein sequence ID" value="AEC10219.1"/>
    <property type="molecule type" value="Genomic_DNA"/>
</dbReference>
<dbReference type="EMBL" id="CP002685">
    <property type="protein sequence ID" value="ANM63201.1"/>
    <property type="molecule type" value="Genomic_DNA"/>
</dbReference>
<dbReference type="EMBL" id="AY050457">
    <property type="protein sequence ID" value="AAK91471.1"/>
    <property type="molecule type" value="mRNA"/>
</dbReference>
<dbReference type="EMBL" id="BT002247">
    <property type="protein sequence ID" value="AAN72258.1"/>
    <property type="molecule type" value="mRNA"/>
</dbReference>
<dbReference type="EMBL" id="AK176395">
    <property type="protein sequence ID" value="BAD44158.1"/>
    <property type="molecule type" value="mRNA"/>
</dbReference>
<dbReference type="EMBL" id="AK176406">
    <property type="protein sequence ID" value="BAD44169.1"/>
    <property type="molecule type" value="mRNA"/>
</dbReference>
<dbReference type="EMBL" id="AK176479">
    <property type="protein sequence ID" value="BAD44242.1"/>
    <property type="molecule type" value="mRNA"/>
</dbReference>
<dbReference type="EMBL" id="AK220792">
    <property type="protein sequence ID" value="BAD94036.1"/>
    <property type="molecule type" value="mRNA"/>
</dbReference>
<dbReference type="EMBL" id="AK221258">
    <property type="protein sequence ID" value="BAD93910.1"/>
    <property type="molecule type" value="mRNA"/>
</dbReference>
<dbReference type="EMBL" id="AK221259">
    <property type="protein sequence ID" value="BAD93914.1"/>
    <property type="molecule type" value="mRNA"/>
</dbReference>
<dbReference type="EMBL" id="AK229845">
    <property type="protein sequence ID" value="BAF01674.1"/>
    <property type="molecule type" value="mRNA"/>
</dbReference>
<dbReference type="EMBL" id="AK230277">
    <property type="protein sequence ID" value="BAF02079.1"/>
    <property type="molecule type" value="mRNA"/>
</dbReference>
<dbReference type="PIR" id="G84862">
    <property type="entry name" value="G84862"/>
</dbReference>
<dbReference type="PIR" id="H84862">
    <property type="entry name" value="H84862"/>
</dbReference>
<dbReference type="RefSeq" id="NP_001031535.1">
    <molecule id="Q67YI9-2"/>
    <property type="nucleotide sequence ID" value="NM_001036458.2"/>
</dbReference>
<dbReference type="RefSeq" id="NP_001325306.1">
    <molecule id="Q67YI9-1"/>
    <property type="nucleotide sequence ID" value="NM_001337018.1"/>
</dbReference>
<dbReference type="RefSeq" id="NP_850386.1">
    <molecule id="Q67YI9-1"/>
    <property type="nucleotide sequence ID" value="NM_180055.3"/>
</dbReference>
<dbReference type="RefSeq" id="NP_850387.1">
    <molecule id="Q67YI9-1"/>
    <property type="nucleotide sequence ID" value="NM_180056.2"/>
</dbReference>
<dbReference type="RefSeq" id="NP_973675.1">
    <molecule id="Q67YI9-1"/>
    <property type="nucleotide sequence ID" value="NM_201946.4"/>
</dbReference>
<dbReference type="SMR" id="Q67YI9"/>
<dbReference type="BioGRID" id="4255">
    <property type="interactions" value="7"/>
</dbReference>
<dbReference type="FunCoup" id="Q67YI9">
    <property type="interactions" value="2657"/>
</dbReference>
<dbReference type="STRING" id="3702.Q67YI9"/>
<dbReference type="GlyGen" id="Q67YI9">
    <property type="glycosylation" value="3 sites, 1 O-linked glycan (2 sites)"/>
</dbReference>
<dbReference type="iPTMnet" id="Q67YI9"/>
<dbReference type="PaxDb" id="3702-AT2G43160.1"/>
<dbReference type="ProteomicsDB" id="221849">
    <molecule id="Q67YI9-1"/>
</dbReference>
<dbReference type="EnsemblPlants" id="AT2G43160.1">
    <molecule id="Q67YI9-1"/>
    <property type="protein sequence ID" value="AT2G43160.1"/>
    <property type="gene ID" value="AT2G43160"/>
</dbReference>
<dbReference type="EnsemblPlants" id="AT2G43160.2">
    <molecule id="Q67YI9-1"/>
    <property type="protein sequence ID" value="AT2G43160.2"/>
    <property type="gene ID" value="AT2G43160"/>
</dbReference>
<dbReference type="EnsemblPlants" id="AT2G43160.3">
    <molecule id="Q67YI9-1"/>
    <property type="protein sequence ID" value="AT2G43160.3"/>
    <property type="gene ID" value="AT2G43160"/>
</dbReference>
<dbReference type="EnsemblPlants" id="AT2G43160.4">
    <molecule id="Q67YI9-2"/>
    <property type="protein sequence ID" value="AT2G43160.4"/>
    <property type="gene ID" value="AT2G43160"/>
</dbReference>
<dbReference type="EnsemblPlants" id="AT2G43160.5">
    <molecule id="Q67YI9-1"/>
    <property type="protein sequence ID" value="AT2G43160.5"/>
    <property type="gene ID" value="AT2G43160"/>
</dbReference>
<dbReference type="GeneID" id="818918"/>
<dbReference type="Gramene" id="AT2G43160.1">
    <molecule id="Q67YI9-1"/>
    <property type="protein sequence ID" value="AT2G43160.1"/>
    <property type="gene ID" value="AT2G43160"/>
</dbReference>
<dbReference type="Gramene" id="AT2G43160.2">
    <molecule id="Q67YI9-1"/>
    <property type="protein sequence ID" value="AT2G43160.2"/>
    <property type="gene ID" value="AT2G43160"/>
</dbReference>
<dbReference type="Gramene" id="AT2G43160.3">
    <molecule id="Q67YI9-1"/>
    <property type="protein sequence ID" value="AT2G43160.3"/>
    <property type="gene ID" value="AT2G43160"/>
</dbReference>
<dbReference type="Gramene" id="AT2G43160.4">
    <molecule id="Q67YI9-2"/>
    <property type="protein sequence ID" value="AT2G43160.4"/>
    <property type="gene ID" value="AT2G43160"/>
</dbReference>
<dbReference type="Gramene" id="AT2G43160.5">
    <molecule id="Q67YI9-1"/>
    <property type="protein sequence ID" value="AT2G43160.5"/>
    <property type="gene ID" value="AT2G43160"/>
</dbReference>
<dbReference type="KEGG" id="ath:AT2G43160"/>
<dbReference type="Araport" id="AT2G43160"/>
<dbReference type="TAIR" id="AT2G43160"/>
<dbReference type="eggNOG" id="KOG2056">
    <property type="taxonomic scope" value="Eukaryota"/>
</dbReference>
<dbReference type="HOGENOM" id="CLU_011840_0_0_1"/>
<dbReference type="InParanoid" id="Q67YI9"/>
<dbReference type="OMA" id="FDSINRM"/>
<dbReference type="OrthoDB" id="4033880at2759"/>
<dbReference type="PhylomeDB" id="Q67YI9"/>
<dbReference type="CD-CODE" id="4299E36E">
    <property type="entry name" value="Nucleolus"/>
</dbReference>
<dbReference type="PRO" id="PR:Q67YI9"/>
<dbReference type="Proteomes" id="UP000006548">
    <property type="component" value="Chromosome 2"/>
</dbReference>
<dbReference type="ExpressionAtlas" id="Q67YI9">
    <property type="expression patterns" value="baseline and differential"/>
</dbReference>
<dbReference type="GO" id="GO:0009504">
    <property type="term" value="C:cell plate"/>
    <property type="evidence" value="ECO:0000314"/>
    <property type="project" value="TAIR"/>
</dbReference>
<dbReference type="GO" id="GO:0030125">
    <property type="term" value="C:clathrin vesicle coat"/>
    <property type="evidence" value="ECO:0000318"/>
    <property type="project" value="GO_Central"/>
</dbReference>
<dbReference type="GO" id="GO:0005829">
    <property type="term" value="C:cytosol"/>
    <property type="evidence" value="ECO:0007005"/>
    <property type="project" value="TAIR"/>
</dbReference>
<dbReference type="GO" id="GO:0005768">
    <property type="term" value="C:endosome"/>
    <property type="evidence" value="ECO:0000318"/>
    <property type="project" value="GO_Central"/>
</dbReference>
<dbReference type="GO" id="GO:0005794">
    <property type="term" value="C:Golgi apparatus"/>
    <property type="evidence" value="ECO:0000314"/>
    <property type="project" value="UniProtKB"/>
</dbReference>
<dbReference type="GO" id="GO:0000325">
    <property type="term" value="C:plant-type vacuole"/>
    <property type="evidence" value="ECO:0007005"/>
    <property type="project" value="TAIR"/>
</dbReference>
<dbReference type="GO" id="GO:0005886">
    <property type="term" value="C:plasma membrane"/>
    <property type="evidence" value="ECO:0000314"/>
    <property type="project" value="TAIR"/>
</dbReference>
<dbReference type="GO" id="GO:0030276">
    <property type="term" value="F:clathrin binding"/>
    <property type="evidence" value="ECO:0000314"/>
    <property type="project" value="UniProtKB"/>
</dbReference>
<dbReference type="GO" id="GO:0005543">
    <property type="term" value="F:phospholipid binding"/>
    <property type="evidence" value="ECO:0000314"/>
    <property type="project" value="UniProtKB"/>
</dbReference>
<dbReference type="GO" id="GO:0006897">
    <property type="term" value="P:endocytosis"/>
    <property type="evidence" value="ECO:0000318"/>
    <property type="project" value="GO_Central"/>
</dbReference>
<dbReference type="GO" id="GO:0015031">
    <property type="term" value="P:protein transport"/>
    <property type="evidence" value="ECO:0007669"/>
    <property type="project" value="UniProtKB-KW"/>
</dbReference>
<dbReference type="CDD" id="cd03571">
    <property type="entry name" value="ENTH"/>
    <property type="match status" value="1"/>
</dbReference>
<dbReference type="FunFam" id="1.25.40.90:FF:000006">
    <property type="entry name" value="Clathrin interactor 1"/>
    <property type="match status" value="1"/>
</dbReference>
<dbReference type="Gene3D" id="1.25.40.90">
    <property type="match status" value="1"/>
</dbReference>
<dbReference type="InterPro" id="IPR013809">
    <property type="entry name" value="ENTH"/>
</dbReference>
<dbReference type="InterPro" id="IPR008942">
    <property type="entry name" value="ENTH_VHS"/>
</dbReference>
<dbReference type="PANTHER" id="PTHR12276:SF91">
    <property type="entry name" value="CLATHRIN INTERACTOR EPSIN 2-RELATED"/>
    <property type="match status" value="1"/>
</dbReference>
<dbReference type="PANTHER" id="PTHR12276">
    <property type="entry name" value="EPSIN/ENT-RELATED"/>
    <property type="match status" value="1"/>
</dbReference>
<dbReference type="Pfam" id="PF01417">
    <property type="entry name" value="ENTH"/>
    <property type="match status" value="1"/>
</dbReference>
<dbReference type="SMART" id="SM00273">
    <property type="entry name" value="ENTH"/>
    <property type="match status" value="1"/>
</dbReference>
<dbReference type="SUPFAM" id="SSF48464">
    <property type="entry name" value="ENTH/VHS domain"/>
    <property type="match status" value="1"/>
</dbReference>
<dbReference type="PROSITE" id="PS50942">
    <property type="entry name" value="ENTH"/>
    <property type="match status" value="1"/>
</dbReference>
<evidence type="ECO:0000250" key="1"/>
<evidence type="ECO:0000255" key="2">
    <source>
        <dbReference type="PROSITE-ProRule" id="PRU00243"/>
    </source>
</evidence>
<evidence type="ECO:0000256" key="3">
    <source>
        <dbReference type="SAM" id="MobiDB-lite"/>
    </source>
</evidence>
<evidence type="ECO:0000269" key="4">
    <source>
    </source>
</evidence>
<evidence type="ECO:0000303" key="5">
    <source ref="4"/>
</evidence>
<evidence type="ECO:0000305" key="6"/>
<evidence type="ECO:0007744" key="7">
    <source>
    </source>
</evidence>
<evidence type="ECO:0007744" key="8">
    <source>
    </source>
</evidence>
<protein>
    <recommendedName>
        <fullName>Clathrin interactor EPSIN 2</fullName>
    </recommendedName>
    <alternativeName>
        <fullName>EPSIN-related 2</fullName>
    </alternativeName>
</protein>
<gene>
    <name type="primary">EPSIN2</name>
    <name type="synonym">EPSINR2</name>
    <name type="ordered locus">At2g43160/At2g43170</name>
    <name type="ORF">F14B2.10</name>
    <name type="ORF">F14B2.11</name>
</gene>
<accession>Q67YI9</accession>
<accession>Q570B8</accession>
<accession>Q67YS3</accession>
<accession>Q94A14</accession>
<accession>Q9ZW78</accession>
<accession>Q9ZW79</accession>
<reference key="1">
    <citation type="journal article" date="1999" name="Nature">
        <title>Sequence and analysis of chromosome 2 of the plant Arabidopsis thaliana.</title>
        <authorList>
            <person name="Lin X."/>
            <person name="Kaul S."/>
            <person name="Rounsley S.D."/>
            <person name="Shea T.P."/>
            <person name="Benito M.-I."/>
            <person name="Town C.D."/>
            <person name="Fujii C.Y."/>
            <person name="Mason T.M."/>
            <person name="Bowman C.L."/>
            <person name="Barnstead M.E."/>
            <person name="Feldblyum T.V."/>
            <person name="Buell C.R."/>
            <person name="Ketchum K.A."/>
            <person name="Lee J.J."/>
            <person name="Ronning C.M."/>
            <person name="Koo H.L."/>
            <person name="Moffat K.S."/>
            <person name="Cronin L.A."/>
            <person name="Shen M."/>
            <person name="Pai G."/>
            <person name="Van Aken S."/>
            <person name="Umayam L."/>
            <person name="Tallon L.J."/>
            <person name="Gill J.E."/>
            <person name="Adams M.D."/>
            <person name="Carrera A.J."/>
            <person name="Creasy T.H."/>
            <person name="Goodman H.M."/>
            <person name="Somerville C.R."/>
            <person name="Copenhaver G.P."/>
            <person name="Preuss D."/>
            <person name="Nierman W.C."/>
            <person name="White O."/>
            <person name="Eisen J.A."/>
            <person name="Salzberg S.L."/>
            <person name="Fraser C.M."/>
            <person name="Venter J.C."/>
        </authorList>
    </citation>
    <scope>NUCLEOTIDE SEQUENCE [LARGE SCALE GENOMIC DNA]</scope>
    <source>
        <strain>cv. Columbia</strain>
    </source>
</reference>
<reference key="2">
    <citation type="journal article" date="2017" name="Plant J.">
        <title>Araport11: a complete reannotation of the Arabidopsis thaliana reference genome.</title>
        <authorList>
            <person name="Cheng C.Y."/>
            <person name="Krishnakumar V."/>
            <person name="Chan A.P."/>
            <person name="Thibaud-Nissen F."/>
            <person name="Schobel S."/>
            <person name="Town C.D."/>
        </authorList>
    </citation>
    <scope>GENOME REANNOTATION</scope>
    <source>
        <strain>cv. Columbia</strain>
    </source>
</reference>
<reference key="3">
    <citation type="journal article" date="2003" name="Science">
        <title>Empirical analysis of transcriptional activity in the Arabidopsis genome.</title>
        <authorList>
            <person name="Yamada K."/>
            <person name="Lim J."/>
            <person name="Dale J.M."/>
            <person name="Chen H."/>
            <person name="Shinn P."/>
            <person name="Palm C.J."/>
            <person name="Southwick A.M."/>
            <person name="Wu H.C."/>
            <person name="Kim C.J."/>
            <person name="Nguyen M."/>
            <person name="Pham P.K."/>
            <person name="Cheuk R.F."/>
            <person name="Karlin-Newmann G."/>
            <person name="Liu S.X."/>
            <person name="Lam B."/>
            <person name="Sakano H."/>
            <person name="Wu T."/>
            <person name="Yu G."/>
            <person name="Miranda M."/>
            <person name="Quach H.L."/>
            <person name="Tripp M."/>
            <person name="Chang C.H."/>
            <person name="Lee J.M."/>
            <person name="Toriumi M.J."/>
            <person name="Chan M.M."/>
            <person name="Tang C.C."/>
            <person name="Onodera C.S."/>
            <person name="Deng J.M."/>
            <person name="Akiyama K."/>
            <person name="Ansari Y."/>
            <person name="Arakawa T."/>
            <person name="Banh J."/>
            <person name="Banno F."/>
            <person name="Bowser L."/>
            <person name="Brooks S.Y."/>
            <person name="Carninci P."/>
            <person name="Chao Q."/>
            <person name="Choy N."/>
            <person name="Enju A."/>
            <person name="Goldsmith A.D."/>
            <person name="Gurjal M."/>
            <person name="Hansen N.F."/>
            <person name="Hayashizaki Y."/>
            <person name="Johnson-Hopson C."/>
            <person name="Hsuan V.W."/>
            <person name="Iida K."/>
            <person name="Karnes M."/>
            <person name="Khan S."/>
            <person name="Koesema E."/>
            <person name="Ishida J."/>
            <person name="Jiang P.X."/>
            <person name="Jones T."/>
            <person name="Kawai J."/>
            <person name="Kamiya A."/>
            <person name="Meyers C."/>
            <person name="Nakajima M."/>
            <person name="Narusaka M."/>
            <person name="Seki M."/>
            <person name="Sakurai T."/>
            <person name="Satou M."/>
            <person name="Tamse R."/>
            <person name="Vaysberg M."/>
            <person name="Wallender E.K."/>
            <person name="Wong C."/>
            <person name="Yamamura Y."/>
            <person name="Yuan S."/>
            <person name="Shinozaki K."/>
            <person name="Davis R.W."/>
            <person name="Theologis A."/>
            <person name="Ecker J.R."/>
        </authorList>
    </citation>
    <scope>NUCLEOTIDE SEQUENCE [LARGE SCALE MRNA] (ISOFORM 1)</scope>
    <source>
        <strain>cv. Columbia</strain>
    </source>
</reference>
<reference key="4">
    <citation type="submission" date="2006-07" db="EMBL/GenBank/DDBJ databases">
        <title>Large-scale analysis of RIKEN Arabidopsis full-length (RAFL) cDNAs.</title>
        <authorList>
            <person name="Totoki Y."/>
            <person name="Seki M."/>
            <person name="Ishida J."/>
            <person name="Nakajima M."/>
            <person name="Enju A."/>
            <person name="Kamiya A."/>
            <person name="Narusaka M."/>
            <person name="Shin-i T."/>
            <person name="Nakagawa M."/>
            <person name="Sakamoto N."/>
            <person name="Oishi K."/>
            <person name="Kohara Y."/>
            <person name="Kobayashi M."/>
            <person name="Toyoda A."/>
            <person name="Sakaki Y."/>
            <person name="Sakurai T."/>
            <person name="Iida K."/>
            <person name="Akiyama K."/>
            <person name="Satou M."/>
            <person name="Toyoda T."/>
            <person name="Konagaya A."/>
            <person name="Carninci P."/>
            <person name="Kawai J."/>
            <person name="Hayashizaki Y."/>
            <person name="Shinozaki K."/>
        </authorList>
    </citation>
    <scope>NUCLEOTIDE SEQUENCE [LARGE SCALE MRNA] (ISOFORMS 1 AND 2)</scope>
    <source>
        <strain>cv. Columbia</strain>
    </source>
</reference>
<reference key="5">
    <citation type="journal article" date="2005" name="Protoplasma">
        <title>Sequence analysis of Arabidopsis thaliana E/ANTH-domain-containing proteins: membrane tethers of the clathrin-dependent vesicle budding machinery.</title>
        <authorList>
            <person name="Holstein S.E."/>
            <person name="Oliviusson P."/>
        </authorList>
    </citation>
    <scope>GENE FAMILY</scope>
</reference>
<reference key="6">
    <citation type="journal article" date="2007" name="Plant Physiol.">
        <title>EpsinR2 interacts with clathrin, adaptor protein-3, AtVTI12, and phosphatidylinositol-3-phosphate. Implications for EpsinR2 function in protein trafficking in plant cells.</title>
        <authorList>
            <person name="Lee G.-J."/>
            <person name="Kim H."/>
            <person name="Kang H."/>
            <person name="Jang M."/>
            <person name="Lee D.W."/>
            <person name="Lee S."/>
            <person name="Hwang I."/>
        </authorList>
    </citation>
    <scope>FUNCTION</scope>
    <scope>SUBCELLULAR LOCATION</scope>
    <scope>INTERACTION WITH CLATHRIN; VTI12; ALPHA-ADR AND DELTA-ADR</scope>
    <scope>MUTAGENESIS OF 409-LEU--PHE-413 AND 454-ASP--PHE-456</scope>
</reference>
<reference key="7">
    <citation type="journal article" date="2009" name="J. Proteomics">
        <title>Phosphoproteomic analysis of nuclei-enriched fractions from Arabidopsis thaliana.</title>
        <authorList>
            <person name="Jones A.M.E."/>
            <person name="MacLean D."/>
            <person name="Studholme D.J."/>
            <person name="Serna-Sanz A."/>
            <person name="Andreasson E."/>
            <person name="Rathjen J.P."/>
            <person name="Peck S.C."/>
        </authorList>
    </citation>
    <scope>PHOSPHORYLATION [LARGE SCALE ANALYSIS] AT SER-282</scope>
    <scope>IDENTIFICATION BY MASS SPECTROMETRY [LARGE SCALE ANALYSIS]</scope>
    <source>
        <strain>cv. Columbia</strain>
    </source>
</reference>
<reference key="8">
    <citation type="journal article" date="2009" name="Plant Physiol.">
        <title>Large-scale Arabidopsis phosphoproteome profiling reveals novel chloroplast kinase substrates and phosphorylation networks.</title>
        <authorList>
            <person name="Reiland S."/>
            <person name="Messerli G."/>
            <person name="Baerenfaller K."/>
            <person name="Gerrits B."/>
            <person name="Endler A."/>
            <person name="Grossmann J."/>
            <person name="Gruissem W."/>
            <person name="Baginsky S."/>
        </authorList>
    </citation>
    <scope>PHOSPHORYLATION [LARGE SCALE ANALYSIS] AT SER-270 AND SER-282</scope>
    <scope>IDENTIFICATION BY MASS SPECTROMETRY [LARGE SCALE ANALYSIS]</scope>
</reference>